<sequence length="55" mass="6536">MPQLNPHPWFSIFITSWLILIIILLPKIKSHIPNNSPTNKKNMLTTPMPWTWPWT</sequence>
<accession>O79674</accession>
<gene>
    <name evidence="1" type="primary">MT-ATP8</name>
    <name type="synonym">ATP8</name>
    <name type="synonym">ATPASE8</name>
    <name type="synonym">MTATP8</name>
</gene>
<name>ATP8_PELSU</name>
<keyword id="KW-0066">ATP synthesis</keyword>
<keyword id="KW-0138">CF(0)</keyword>
<keyword id="KW-0375">Hydrogen ion transport</keyword>
<keyword id="KW-0406">Ion transport</keyword>
<keyword id="KW-0472">Membrane</keyword>
<keyword id="KW-0496">Mitochondrion</keyword>
<keyword id="KW-0812">Transmembrane</keyword>
<keyword id="KW-1133">Transmembrane helix</keyword>
<keyword id="KW-0813">Transport</keyword>
<evidence type="ECO:0000250" key="1">
    <source>
        <dbReference type="UniProtKB" id="P03928"/>
    </source>
</evidence>
<evidence type="ECO:0000250" key="2">
    <source>
        <dbReference type="UniProtKB" id="P19483"/>
    </source>
</evidence>
<evidence type="ECO:0000255" key="3"/>
<evidence type="ECO:0000305" key="4"/>
<dbReference type="EMBL" id="AF039066">
    <property type="protein sequence ID" value="AAD05054.1"/>
    <property type="molecule type" value="Genomic_DNA"/>
</dbReference>
<dbReference type="PIR" id="T11105">
    <property type="entry name" value="T11105"/>
</dbReference>
<dbReference type="RefSeq" id="NP_008436.1">
    <property type="nucleotide sequence ID" value="NC_001947.1"/>
</dbReference>
<dbReference type="SMR" id="O79674"/>
<dbReference type="GeneID" id="808287"/>
<dbReference type="CTD" id="4509"/>
<dbReference type="GO" id="GO:0031966">
    <property type="term" value="C:mitochondrial membrane"/>
    <property type="evidence" value="ECO:0007669"/>
    <property type="project" value="UniProtKB-SubCell"/>
</dbReference>
<dbReference type="GO" id="GO:0045259">
    <property type="term" value="C:proton-transporting ATP synthase complex"/>
    <property type="evidence" value="ECO:0007669"/>
    <property type="project" value="UniProtKB-KW"/>
</dbReference>
<dbReference type="GO" id="GO:0015078">
    <property type="term" value="F:proton transmembrane transporter activity"/>
    <property type="evidence" value="ECO:0007669"/>
    <property type="project" value="InterPro"/>
</dbReference>
<dbReference type="GO" id="GO:0015986">
    <property type="term" value="P:proton motive force-driven ATP synthesis"/>
    <property type="evidence" value="ECO:0007669"/>
    <property type="project" value="InterPro"/>
</dbReference>
<dbReference type="InterPro" id="IPR001421">
    <property type="entry name" value="ATP8_metazoa"/>
</dbReference>
<dbReference type="InterPro" id="IPR050635">
    <property type="entry name" value="ATPase_protein_8"/>
</dbReference>
<dbReference type="PANTHER" id="PTHR39937">
    <property type="entry name" value="ATP SYNTHASE PROTEIN 8"/>
    <property type="match status" value="1"/>
</dbReference>
<dbReference type="PANTHER" id="PTHR39937:SF1">
    <property type="entry name" value="ATP SYNTHASE PROTEIN 8"/>
    <property type="match status" value="1"/>
</dbReference>
<dbReference type="Pfam" id="PF00895">
    <property type="entry name" value="ATP-synt_8"/>
    <property type="match status" value="1"/>
</dbReference>
<geneLocation type="mitochondrion"/>
<protein>
    <recommendedName>
        <fullName evidence="1">ATP synthase F(0) complex subunit 8</fullName>
    </recommendedName>
    <alternativeName>
        <fullName>A6L</fullName>
    </alternativeName>
    <alternativeName>
        <fullName>F-ATPase subunit 8</fullName>
    </alternativeName>
</protein>
<proteinExistence type="inferred from homology"/>
<feature type="chain" id="PRO_0000195565" description="ATP synthase F(0) complex subunit 8">
    <location>
        <begin position="1"/>
        <end position="55"/>
    </location>
</feature>
<feature type="transmembrane region" description="Helical" evidence="3">
    <location>
        <begin position="4"/>
        <end position="24"/>
    </location>
</feature>
<organism>
    <name type="scientific">Pelomedusa subrufa</name>
    <name type="common">African side-necked turtle</name>
    <dbReference type="NCBI Taxonomy" id="44522"/>
    <lineage>
        <taxon>Eukaryota</taxon>
        <taxon>Metazoa</taxon>
        <taxon>Chordata</taxon>
        <taxon>Craniata</taxon>
        <taxon>Vertebrata</taxon>
        <taxon>Euteleostomi</taxon>
        <taxon>Archelosauria</taxon>
        <taxon>Testudinata</taxon>
        <taxon>Testudines</taxon>
        <taxon>Pleurodira</taxon>
        <taxon>Pelomedusidae</taxon>
        <taxon>Pelomedusa</taxon>
    </lineage>
</organism>
<reference key="1">
    <citation type="journal article" date="1998" name="Proc. Natl. Acad. Sci. U.S.A.">
        <title>Complete mitochondrial genome suggests diapsid affinities of turtles.</title>
        <authorList>
            <person name="Zardoya R."/>
            <person name="Meyer A."/>
        </authorList>
    </citation>
    <scope>NUCLEOTIDE SEQUENCE [GENOMIC DNA]</scope>
</reference>
<comment type="function">
    <text evidence="1 2">Subunit 8, of the mitochondrial membrane ATP synthase complex (F(1)F(0) ATP synthase or Complex V) that produces ATP from ADP in the presence of a proton gradient across the membrane which is generated by electron transport complexes of the respiratory chain. ATP synthase complex consist of a soluble F(1) head domain - the catalytic core - and a membrane F(1) domain - the membrane proton channel. These two domains are linked by a central stalk rotating inside the F(1) region and a stationary peripheral stalk. During catalysis, ATP synthesis in the catalytic domain of F(1) is coupled via a rotary mechanism of the central stalk subunits to proton translocation (By similarity). In vivo, can only synthesize ATP although its ATP hydrolase activity can be activated artificially in vitro (By similarity). Part of the complex F(0) domain (By similarity).</text>
</comment>
<comment type="subunit">
    <text evidence="1">Component of the ATP synthase complex composed at least of ATP5F1A/subunit alpha, ATP5F1B/subunit beta, ATP5MC1/subunit c (homooctomer), MT-ATP6/subunit a, MT-ATP8/subunit 8, ATP5ME/subunit e, ATP5MF/subunit f, ATP5MG/subunit g, ATP5MK/subunit k, ATP5MJ/subunit j, ATP5F1C/subunit gamma, ATP5F1D/subunit delta, ATP5F1E/subunit epsilon, ATP5PF/subunit F6, ATP5PB/subunit b, ATP5PD/subunit d, ATP5PO/subunit OSCP. ATP synthase complex consists of a soluble F(1) head domain (subunits alpha(3) and beta(3)) - the catalytic core - and a membrane F(0) domain - the membrane proton channel (subunits c, a, 8, e, f, g, k and j). These two domains are linked by a central stalk (subunits gamma, delta, and epsilon) rotating inside the F1 region and a stationary peripheral stalk (subunits F6, b, d, and OSCP).</text>
</comment>
<comment type="subcellular location">
    <subcellularLocation>
        <location>Mitochondrion membrane</location>
        <topology>Single-pass membrane protein</topology>
    </subcellularLocation>
</comment>
<comment type="similarity">
    <text evidence="4">Belongs to the ATPase protein 8 family.</text>
</comment>